<dbReference type="EMBL" id="AE017220">
    <property type="protein sequence ID" value="AAX67272.1"/>
    <property type="molecule type" value="Genomic_DNA"/>
</dbReference>
<dbReference type="RefSeq" id="WP_000644742.1">
    <property type="nucleotide sequence ID" value="NC_006905.1"/>
</dbReference>
<dbReference type="SMR" id="Q57J40"/>
<dbReference type="GeneID" id="93035739"/>
<dbReference type="KEGG" id="sec:SCH_3366"/>
<dbReference type="HOGENOM" id="CLU_158491_1_2_6"/>
<dbReference type="Proteomes" id="UP000000538">
    <property type="component" value="Chromosome"/>
</dbReference>
<dbReference type="GO" id="GO:0022625">
    <property type="term" value="C:cytosolic large ribosomal subunit"/>
    <property type="evidence" value="ECO:0007669"/>
    <property type="project" value="TreeGrafter"/>
</dbReference>
<dbReference type="GO" id="GO:0003735">
    <property type="term" value="F:structural constituent of ribosome"/>
    <property type="evidence" value="ECO:0007669"/>
    <property type="project" value="InterPro"/>
</dbReference>
<dbReference type="GO" id="GO:0006412">
    <property type="term" value="P:translation"/>
    <property type="evidence" value="ECO:0007669"/>
    <property type="project" value="UniProtKB-UniRule"/>
</dbReference>
<dbReference type="CDD" id="cd00427">
    <property type="entry name" value="Ribosomal_L29_HIP"/>
    <property type="match status" value="1"/>
</dbReference>
<dbReference type="Gene3D" id="6.10.140.1970">
    <property type="match status" value="1"/>
</dbReference>
<dbReference type="HAMAP" id="MF_00374">
    <property type="entry name" value="Ribosomal_uL29"/>
    <property type="match status" value="1"/>
</dbReference>
<dbReference type="InterPro" id="IPR050063">
    <property type="entry name" value="Ribosomal_protein_uL29"/>
</dbReference>
<dbReference type="InterPro" id="IPR001854">
    <property type="entry name" value="Ribosomal_uL29"/>
</dbReference>
<dbReference type="InterPro" id="IPR018254">
    <property type="entry name" value="Ribosomal_uL29_CS"/>
</dbReference>
<dbReference type="InterPro" id="IPR036049">
    <property type="entry name" value="Ribosomal_uL29_sf"/>
</dbReference>
<dbReference type="NCBIfam" id="TIGR00012">
    <property type="entry name" value="L29"/>
    <property type="match status" value="1"/>
</dbReference>
<dbReference type="PANTHER" id="PTHR10916">
    <property type="entry name" value="60S RIBOSOMAL PROTEIN L35/50S RIBOSOMAL PROTEIN L29"/>
    <property type="match status" value="1"/>
</dbReference>
<dbReference type="PANTHER" id="PTHR10916:SF0">
    <property type="entry name" value="LARGE RIBOSOMAL SUBUNIT PROTEIN UL29C"/>
    <property type="match status" value="1"/>
</dbReference>
<dbReference type="Pfam" id="PF00831">
    <property type="entry name" value="Ribosomal_L29"/>
    <property type="match status" value="1"/>
</dbReference>
<dbReference type="SUPFAM" id="SSF46561">
    <property type="entry name" value="Ribosomal protein L29 (L29p)"/>
    <property type="match status" value="1"/>
</dbReference>
<dbReference type="PROSITE" id="PS00579">
    <property type="entry name" value="RIBOSOMAL_L29"/>
    <property type="match status" value="1"/>
</dbReference>
<accession>Q57J40</accession>
<proteinExistence type="inferred from homology"/>
<protein>
    <recommendedName>
        <fullName evidence="1">Large ribosomal subunit protein uL29</fullName>
    </recommendedName>
    <alternativeName>
        <fullName evidence="2">50S ribosomal protein L29</fullName>
    </alternativeName>
</protein>
<sequence>MKAKELREKSVEELNTELLNLLREQFNLRMQAASGQLQQSHLLKQVRRDVARVKTLLTEKAGA</sequence>
<evidence type="ECO:0000255" key="1">
    <source>
        <dbReference type="HAMAP-Rule" id="MF_00374"/>
    </source>
</evidence>
<evidence type="ECO:0000305" key="2"/>
<organism>
    <name type="scientific">Salmonella choleraesuis (strain SC-B67)</name>
    <dbReference type="NCBI Taxonomy" id="321314"/>
    <lineage>
        <taxon>Bacteria</taxon>
        <taxon>Pseudomonadati</taxon>
        <taxon>Pseudomonadota</taxon>
        <taxon>Gammaproteobacteria</taxon>
        <taxon>Enterobacterales</taxon>
        <taxon>Enterobacteriaceae</taxon>
        <taxon>Salmonella</taxon>
    </lineage>
</organism>
<feature type="chain" id="PRO_0000130447" description="Large ribosomal subunit protein uL29">
    <location>
        <begin position="1"/>
        <end position="63"/>
    </location>
</feature>
<comment type="similarity">
    <text evidence="1">Belongs to the universal ribosomal protein uL29 family.</text>
</comment>
<name>RL29_SALCH</name>
<reference key="1">
    <citation type="journal article" date="2005" name="Nucleic Acids Res.">
        <title>The genome sequence of Salmonella enterica serovar Choleraesuis, a highly invasive and resistant zoonotic pathogen.</title>
        <authorList>
            <person name="Chiu C.-H."/>
            <person name="Tang P."/>
            <person name="Chu C."/>
            <person name="Hu S."/>
            <person name="Bao Q."/>
            <person name="Yu J."/>
            <person name="Chou Y.-Y."/>
            <person name="Wang H.-S."/>
            <person name="Lee Y.-S."/>
        </authorList>
    </citation>
    <scope>NUCLEOTIDE SEQUENCE [LARGE SCALE GENOMIC DNA]</scope>
    <source>
        <strain>SC-B67</strain>
    </source>
</reference>
<keyword id="KW-0687">Ribonucleoprotein</keyword>
<keyword id="KW-0689">Ribosomal protein</keyword>
<gene>
    <name evidence="1" type="primary">rpmC</name>
    <name type="ordered locus">SCH_3366</name>
</gene>